<comment type="function">
    <text evidence="1">Catalyzes the ATP-dependent amination of UTP to CTP with either L-glutamine or ammonia as the source of nitrogen. Regulates intracellular CTP levels through interactions with the four ribonucleotide triphosphates.</text>
</comment>
<comment type="catalytic activity">
    <reaction evidence="1">
        <text>UTP + L-glutamine + ATP + H2O = CTP + L-glutamate + ADP + phosphate + 2 H(+)</text>
        <dbReference type="Rhea" id="RHEA:26426"/>
        <dbReference type="ChEBI" id="CHEBI:15377"/>
        <dbReference type="ChEBI" id="CHEBI:15378"/>
        <dbReference type="ChEBI" id="CHEBI:29985"/>
        <dbReference type="ChEBI" id="CHEBI:30616"/>
        <dbReference type="ChEBI" id="CHEBI:37563"/>
        <dbReference type="ChEBI" id="CHEBI:43474"/>
        <dbReference type="ChEBI" id="CHEBI:46398"/>
        <dbReference type="ChEBI" id="CHEBI:58359"/>
        <dbReference type="ChEBI" id="CHEBI:456216"/>
        <dbReference type="EC" id="6.3.4.2"/>
    </reaction>
</comment>
<comment type="catalytic activity">
    <reaction evidence="1">
        <text>L-glutamine + H2O = L-glutamate + NH4(+)</text>
        <dbReference type="Rhea" id="RHEA:15889"/>
        <dbReference type="ChEBI" id="CHEBI:15377"/>
        <dbReference type="ChEBI" id="CHEBI:28938"/>
        <dbReference type="ChEBI" id="CHEBI:29985"/>
        <dbReference type="ChEBI" id="CHEBI:58359"/>
    </reaction>
</comment>
<comment type="catalytic activity">
    <reaction evidence="1">
        <text>UTP + NH4(+) + ATP = CTP + ADP + phosphate + 2 H(+)</text>
        <dbReference type="Rhea" id="RHEA:16597"/>
        <dbReference type="ChEBI" id="CHEBI:15378"/>
        <dbReference type="ChEBI" id="CHEBI:28938"/>
        <dbReference type="ChEBI" id="CHEBI:30616"/>
        <dbReference type="ChEBI" id="CHEBI:37563"/>
        <dbReference type="ChEBI" id="CHEBI:43474"/>
        <dbReference type="ChEBI" id="CHEBI:46398"/>
        <dbReference type="ChEBI" id="CHEBI:456216"/>
    </reaction>
</comment>
<comment type="activity regulation">
    <text evidence="1">Allosterically activated by GTP, when glutamine is the substrate; GTP has no effect on the reaction when ammonia is the substrate. The allosteric effector GTP functions by stabilizing the protein conformation that binds the tetrahedral intermediate(s) formed during glutamine hydrolysis. Inhibited by the product CTP, via allosteric rather than competitive inhibition.</text>
</comment>
<comment type="pathway">
    <text evidence="1">Pyrimidine metabolism; CTP biosynthesis via de novo pathway; CTP from UDP: step 2/2.</text>
</comment>
<comment type="subunit">
    <text evidence="1">Homotetramer.</text>
</comment>
<comment type="miscellaneous">
    <text evidence="1">CTPSs have evolved a hybrid strategy for distinguishing between UTP and CTP. The overlapping regions of the product feedback inhibitory and substrate sites recognize a common feature in both compounds, the triphosphate moiety. To differentiate isosteric substrate and product pyrimidine rings, an additional pocket far from the expected kinase/ligase catalytic site, specifically recognizes the cytosine and ribose portions of the product inhibitor.</text>
</comment>
<comment type="similarity">
    <text evidence="1">Belongs to the CTP synthase family.</text>
</comment>
<reference key="1">
    <citation type="journal article" date="2008" name="ISME J.">
        <title>Comparative genomics of two ecotypes of the marine planktonic copiotroph Alteromonas macleodii suggests alternative lifestyles associated with different kinds of particulate organic matter.</title>
        <authorList>
            <person name="Ivars-Martinez E."/>
            <person name="Martin-Cuadrado A.-B."/>
            <person name="D'Auria G."/>
            <person name="Mira A."/>
            <person name="Ferriera S."/>
            <person name="Johnson J."/>
            <person name="Friedman R."/>
            <person name="Rodriguez-Valera F."/>
        </authorList>
    </citation>
    <scope>NUCLEOTIDE SEQUENCE [LARGE SCALE GENOMIC DNA]</scope>
    <source>
        <strain>DSM 17117 / CIP 110805 / LMG 28347 / Deep ecotype</strain>
    </source>
</reference>
<name>PYRG_ALTMD</name>
<protein>
    <recommendedName>
        <fullName evidence="1">CTP synthase</fullName>
        <ecNumber evidence="1">6.3.4.2</ecNumber>
    </recommendedName>
    <alternativeName>
        <fullName evidence="1">Cytidine 5'-triphosphate synthase</fullName>
    </alternativeName>
    <alternativeName>
        <fullName evidence="1">Cytidine triphosphate synthetase</fullName>
        <shortName evidence="1">CTP synthetase</shortName>
        <shortName evidence="1">CTPS</shortName>
    </alternativeName>
    <alternativeName>
        <fullName evidence="1">UTP--ammonia ligase</fullName>
    </alternativeName>
</protein>
<keyword id="KW-0067">ATP-binding</keyword>
<keyword id="KW-0315">Glutamine amidotransferase</keyword>
<keyword id="KW-0436">Ligase</keyword>
<keyword id="KW-0460">Magnesium</keyword>
<keyword id="KW-0479">Metal-binding</keyword>
<keyword id="KW-0547">Nucleotide-binding</keyword>
<keyword id="KW-0665">Pyrimidine biosynthesis</keyword>
<gene>
    <name evidence="1" type="primary">pyrG</name>
    <name type="ordered locus">MADE_1004720</name>
</gene>
<feature type="chain" id="PRO_1000139373" description="CTP synthase">
    <location>
        <begin position="1"/>
        <end position="543"/>
    </location>
</feature>
<feature type="domain" description="Glutamine amidotransferase type-1" evidence="1">
    <location>
        <begin position="290"/>
        <end position="541"/>
    </location>
</feature>
<feature type="region of interest" description="Amidoligase domain" evidence="1">
    <location>
        <begin position="1"/>
        <end position="265"/>
    </location>
</feature>
<feature type="active site" description="Nucleophile; for glutamine hydrolysis" evidence="1">
    <location>
        <position position="378"/>
    </location>
</feature>
<feature type="active site" evidence="1">
    <location>
        <position position="514"/>
    </location>
</feature>
<feature type="active site" evidence="1">
    <location>
        <position position="516"/>
    </location>
</feature>
<feature type="binding site" evidence="1">
    <location>
        <position position="13"/>
    </location>
    <ligand>
        <name>CTP</name>
        <dbReference type="ChEBI" id="CHEBI:37563"/>
        <note>allosteric inhibitor</note>
    </ligand>
</feature>
<feature type="binding site" evidence="1">
    <location>
        <position position="13"/>
    </location>
    <ligand>
        <name>UTP</name>
        <dbReference type="ChEBI" id="CHEBI:46398"/>
    </ligand>
</feature>
<feature type="binding site" evidence="1">
    <location>
        <begin position="14"/>
        <end position="19"/>
    </location>
    <ligand>
        <name>ATP</name>
        <dbReference type="ChEBI" id="CHEBI:30616"/>
    </ligand>
</feature>
<feature type="binding site" evidence="1">
    <location>
        <position position="71"/>
    </location>
    <ligand>
        <name>ATP</name>
        <dbReference type="ChEBI" id="CHEBI:30616"/>
    </ligand>
</feature>
<feature type="binding site" evidence="1">
    <location>
        <position position="71"/>
    </location>
    <ligand>
        <name>Mg(2+)</name>
        <dbReference type="ChEBI" id="CHEBI:18420"/>
    </ligand>
</feature>
<feature type="binding site" evidence="1">
    <location>
        <position position="139"/>
    </location>
    <ligand>
        <name>Mg(2+)</name>
        <dbReference type="ChEBI" id="CHEBI:18420"/>
    </ligand>
</feature>
<feature type="binding site" evidence="1">
    <location>
        <begin position="146"/>
        <end position="148"/>
    </location>
    <ligand>
        <name>CTP</name>
        <dbReference type="ChEBI" id="CHEBI:37563"/>
        <note>allosteric inhibitor</note>
    </ligand>
</feature>
<feature type="binding site" evidence="1">
    <location>
        <begin position="186"/>
        <end position="191"/>
    </location>
    <ligand>
        <name>CTP</name>
        <dbReference type="ChEBI" id="CHEBI:37563"/>
        <note>allosteric inhibitor</note>
    </ligand>
</feature>
<feature type="binding site" evidence="1">
    <location>
        <begin position="186"/>
        <end position="191"/>
    </location>
    <ligand>
        <name>UTP</name>
        <dbReference type="ChEBI" id="CHEBI:46398"/>
    </ligand>
</feature>
<feature type="binding site" evidence="1">
    <location>
        <position position="222"/>
    </location>
    <ligand>
        <name>CTP</name>
        <dbReference type="ChEBI" id="CHEBI:37563"/>
        <note>allosteric inhibitor</note>
    </ligand>
</feature>
<feature type="binding site" evidence="1">
    <location>
        <position position="222"/>
    </location>
    <ligand>
        <name>UTP</name>
        <dbReference type="ChEBI" id="CHEBI:46398"/>
    </ligand>
</feature>
<feature type="binding site" evidence="1">
    <location>
        <begin position="238"/>
        <end position="240"/>
    </location>
    <ligand>
        <name>ATP</name>
        <dbReference type="ChEBI" id="CHEBI:30616"/>
    </ligand>
</feature>
<feature type="binding site" evidence="1">
    <location>
        <position position="351"/>
    </location>
    <ligand>
        <name>L-glutamine</name>
        <dbReference type="ChEBI" id="CHEBI:58359"/>
    </ligand>
</feature>
<feature type="binding site" evidence="1">
    <location>
        <begin position="379"/>
        <end position="382"/>
    </location>
    <ligand>
        <name>L-glutamine</name>
        <dbReference type="ChEBI" id="CHEBI:58359"/>
    </ligand>
</feature>
<feature type="binding site" evidence="1">
    <location>
        <position position="402"/>
    </location>
    <ligand>
        <name>L-glutamine</name>
        <dbReference type="ChEBI" id="CHEBI:58359"/>
    </ligand>
</feature>
<feature type="binding site" evidence="1">
    <location>
        <position position="469"/>
    </location>
    <ligand>
        <name>L-glutamine</name>
        <dbReference type="ChEBI" id="CHEBI:58359"/>
    </ligand>
</feature>
<proteinExistence type="inferred from homology"/>
<dbReference type="EC" id="6.3.4.2" evidence="1"/>
<dbReference type="EMBL" id="CP001103">
    <property type="protein sequence ID" value="AEA97090.1"/>
    <property type="molecule type" value="Genomic_DNA"/>
</dbReference>
<dbReference type="RefSeq" id="WP_012517444.1">
    <property type="nucleotide sequence ID" value="NC_011138.3"/>
</dbReference>
<dbReference type="SMR" id="B4RVU4"/>
<dbReference type="MEROPS" id="C26.964"/>
<dbReference type="KEGG" id="amc:MADE_1004720"/>
<dbReference type="HOGENOM" id="CLU_011675_5_0_6"/>
<dbReference type="UniPathway" id="UPA00159">
    <property type="reaction ID" value="UER00277"/>
</dbReference>
<dbReference type="Proteomes" id="UP000001870">
    <property type="component" value="Chromosome"/>
</dbReference>
<dbReference type="GO" id="GO:0005829">
    <property type="term" value="C:cytosol"/>
    <property type="evidence" value="ECO:0007669"/>
    <property type="project" value="TreeGrafter"/>
</dbReference>
<dbReference type="GO" id="GO:0005524">
    <property type="term" value="F:ATP binding"/>
    <property type="evidence" value="ECO:0007669"/>
    <property type="project" value="UniProtKB-KW"/>
</dbReference>
<dbReference type="GO" id="GO:0003883">
    <property type="term" value="F:CTP synthase activity"/>
    <property type="evidence" value="ECO:0007669"/>
    <property type="project" value="UniProtKB-UniRule"/>
</dbReference>
<dbReference type="GO" id="GO:0004359">
    <property type="term" value="F:glutaminase activity"/>
    <property type="evidence" value="ECO:0007669"/>
    <property type="project" value="RHEA"/>
</dbReference>
<dbReference type="GO" id="GO:0042802">
    <property type="term" value="F:identical protein binding"/>
    <property type="evidence" value="ECO:0007669"/>
    <property type="project" value="TreeGrafter"/>
</dbReference>
<dbReference type="GO" id="GO:0046872">
    <property type="term" value="F:metal ion binding"/>
    <property type="evidence" value="ECO:0007669"/>
    <property type="project" value="UniProtKB-KW"/>
</dbReference>
<dbReference type="GO" id="GO:0044210">
    <property type="term" value="P:'de novo' CTP biosynthetic process"/>
    <property type="evidence" value="ECO:0007669"/>
    <property type="project" value="UniProtKB-UniRule"/>
</dbReference>
<dbReference type="GO" id="GO:0019856">
    <property type="term" value="P:pyrimidine nucleobase biosynthetic process"/>
    <property type="evidence" value="ECO:0007669"/>
    <property type="project" value="TreeGrafter"/>
</dbReference>
<dbReference type="CDD" id="cd03113">
    <property type="entry name" value="CTPS_N"/>
    <property type="match status" value="1"/>
</dbReference>
<dbReference type="CDD" id="cd01746">
    <property type="entry name" value="GATase1_CTP_Synthase"/>
    <property type="match status" value="1"/>
</dbReference>
<dbReference type="FunFam" id="3.40.50.300:FF:000009">
    <property type="entry name" value="CTP synthase"/>
    <property type="match status" value="1"/>
</dbReference>
<dbReference type="FunFam" id="3.40.50.880:FF:000002">
    <property type="entry name" value="CTP synthase"/>
    <property type="match status" value="1"/>
</dbReference>
<dbReference type="Gene3D" id="3.40.50.880">
    <property type="match status" value="1"/>
</dbReference>
<dbReference type="Gene3D" id="3.40.50.300">
    <property type="entry name" value="P-loop containing nucleotide triphosphate hydrolases"/>
    <property type="match status" value="1"/>
</dbReference>
<dbReference type="HAMAP" id="MF_01227">
    <property type="entry name" value="PyrG"/>
    <property type="match status" value="1"/>
</dbReference>
<dbReference type="InterPro" id="IPR029062">
    <property type="entry name" value="Class_I_gatase-like"/>
</dbReference>
<dbReference type="InterPro" id="IPR004468">
    <property type="entry name" value="CTP_synthase"/>
</dbReference>
<dbReference type="InterPro" id="IPR017456">
    <property type="entry name" value="CTP_synthase_N"/>
</dbReference>
<dbReference type="InterPro" id="IPR017926">
    <property type="entry name" value="GATASE"/>
</dbReference>
<dbReference type="InterPro" id="IPR033828">
    <property type="entry name" value="GATase1_CTP_Synthase"/>
</dbReference>
<dbReference type="InterPro" id="IPR027417">
    <property type="entry name" value="P-loop_NTPase"/>
</dbReference>
<dbReference type="NCBIfam" id="NF003792">
    <property type="entry name" value="PRK05380.1"/>
    <property type="match status" value="1"/>
</dbReference>
<dbReference type="NCBIfam" id="TIGR00337">
    <property type="entry name" value="PyrG"/>
    <property type="match status" value="1"/>
</dbReference>
<dbReference type="PANTHER" id="PTHR11550">
    <property type="entry name" value="CTP SYNTHASE"/>
    <property type="match status" value="1"/>
</dbReference>
<dbReference type="PANTHER" id="PTHR11550:SF0">
    <property type="entry name" value="CTP SYNTHASE-RELATED"/>
    <property type="match status" value="1"/>
</dbReference>
<dbReference type="Pfam" id="PF06418">
    <property type="entry name" value="CTP_synth_N"/>
    <property type="match status" value="1"/>
</dbReference>
<dbReference type="Pfam" id="PF00117">
    <property type="entry name" value="GATase"/>
    <property type="match status" value="1"/>
</dbReference>
<dbReference type="SUPFAM" id="SSF52317">
    <property type="entry name" value="Class I glutamine amidotransferase-like"/>
    <property type="match status" value="1"/>
</dbReference>
<dbReference type="SUPFAM" id="SSF52540">
    <property type="entry name" value="P-loop containing nucleoside triphosphate hydrolases"/>
    <property type="match status" value="1"/>
</dbReference>
<dbReference type="PROSITE" id="PS51273">
    <property type="entry name" value="GATASE_TYPE_1"/>
    <property type="match status" value="1"/>
</dbReference>
<sequence length="543" mass="59834">MTNYIFVTGGVVSSLGKGIAAASLAAILEARGLTVTMLKLDPYINVDPGTMSPIQHGEVFVTDDGAETDLDLGHYERFIRTRMTKRNNFTTGRVYEEVLKRERRGDYLGATIQVIPHITNEIKRRVIEGAEGHDVAIVEVGGTVGDIESQPFLEAIRQLGTEVGRERAMFMHLTLVPYMPASGEVKTKPTQHSVKELRSIGIQPDILVCRSVGALPASERSKIALFTNVADKAVISLKDVDSIYRIPAALKAQGMDQLVVDRFGLECNEADLSEWEQVLYAESNPTAEVNIGMIGKYVELPDAYKSVNEALKHAGLKNRLTVNIHHIDSQDVESKGTQILEQLDAILVPGGFGERGIEGKIAAARYARENKVPYLGICLGMQVALIEYARNVAGMEKANSTEFDPETPYPVVGLITEWLDAAGTTEVRTETSDLGGTMRLGSQLCHLIEGTKVHEMYGNAEIYERHRHRYEVNNNLRDQIEAAGLKVSGLSTDKRLVEVVEIPDHPWFIAGQFHPEFTSTPRDGHPLFTGFVAAAGKYQKENH</sequence>
<evidence type="ECO:0000255" key="1">
    <source>
        <dbReference type="HAMAP-Rule" id="MF_01227"/>
    </source>
</evidence>
<organism>
    <name type="scientific">Alteromonas mediterranea (strain DSM 17117 / CIP 110805 / LMG 28347 / Deep ecotype)</name>
    <dbReference type="NCBI Taxonomy" id="1774373"/>
    <lineage>
        <taxon>Bacteria</taxon>
        <taxon>Pseudomonadati</taxon>
        <taxon>Pseudomonadota</taxon>
        <taxon>Gammaproteobacteria</taxon>
        <taxon>Alteromonadales</taxon>
        <taxon>Alteromonadaceae</taxon>
        <taxon>Alteromonas/Salinimonas group</taxon>
        <taxon>Alteromonas</taxon>
    </lineage>
</organism>
<accession>B4RVU4</accession>
<accession>F2GBT9</accession>